<keyword id="KW-0004">4Fe-4S</keyword>
<keyword id="KW-0028">Amino-acid biosynthesis</keyword>
<keyword id="KW-0100">Branched-chain amino acid biosynthesis</keyword>
<keyword id="KW-0408">Iron</keyword>
<keyword id="KW-0411">Iron-sulfur</keyword>
<keyword id="KW-0432">Leucine biosynthesis</keyword>
<keyword id="KW-0456">Lyase</keyword>
<keyword id="KW-0479">Metal-binding</keyword>
<keyword id="KW-1185">Reference proteome</keyword>
<gene>
    <name evidence="1" type="primary">leuC</name>
    <name type="ordered locus">BMAA1729</name>
</gene>
<feature type="chain" id="PRO_0000076732" description="3-isopropylmalate dehydratase large subunit">
    <location>
        <begin position="1"/>
        <end position="469"/>
    </location>
</feature>
<feature type="binding site" evidence="1">
    <location>
        <position position="347"/>
    </location>
    <ligand>
        <name>[4Fe-4S] cluster</name>
        <dbReference type="ChEBI" id="CHEBI:49883"/>
    </ligand>
</feature>
<feature type="binding site" evidence="1">
    <location>
        <position position="410"/>
    </location>
    <ligand>
        <name>[4Fe-4S] cluster</name>
        <dbReference type="ChEBI" id="CHEBI:49883"/>
    </ligand>
</feature>
<feature type="binding site" evidence="1">
    <location>
        <position position="413"/>
    </location>
    <ligand>
        <name>[4Fe-4S] cluster</name>
        <dbReference type="ChEBI" id="CHEBI:49883"/>
    </ligand>
</feature>
<proteinExistence type="inferred from homology"/>
<dbReference type="EC" id="4.2.1.33" evidence="1"/>
<dbReference type="EMBL" id="CP000011">
    <property type="protein sequence ID" value="AAU45708.1"/>
    <property type="molecule type" value="Genomic_DNA"/>
</dbReference>
<dbReference type="RefSeq" id="WP_004187091.1">
    <property type="nucleotide sequence ID" value="NC_006349.2"/>
</dbReference>
<dbReference type="RefSeq" id="YP_106292.1">
    <property type="nucleotide sequence ID" value="NC_006349.2"/>
</dbReference>
<dbReference type="SMR" id="Q62AI6"/>
<dbReference type="GeneID" id="92977643"/>
<dbReference type="KEGG" id="bma:BMAA1729"/>
<dbReference type="PATRIC" id="fig|243160.12.peg.5327"/>
<dbReference type="eggNOG" id="COG0065">
    <property type="taxonomic scope" value="Bacteria"/>
</dbReference>
<dbReference type="HOGENOM" id="CLU_006714_3_4_4"/>
<dbReference type="UniPathway" id="UPA00048">
    <property type="reaction ID" value="UER00071"/>
</dbReference>
<dbReference type="Proteomes" id="UP000006693">
    <property type="component" value="Chromosome 2"/>
</dbReference>
<dbReference type="GO" id="GO:0003861">
    <property type="term" value="F:3-isopropylmalate dehydratase activity"/>
    <property type="evidence" value="ECO:0007669"/>
    <property type="project" value="UniProtKB-UniRule"/>
</dbReference>
<dbReference type="GO" id="GO:0051539">
    <property type="term" value="F:4 iron, 4 sulfur cluster binding"/>
    <property type="evidence" value="ECO:0007669"/>
    <property type="project" value="UniProtKB-KW"/>
</dbReference>
<dbReference type="GO" id="GO:0046872">
    <property type="term" value="F:metal ion binding"/>
    <property type="evidence" value="ECO:0007669"/>
    <property type="project" value="UniProtKB-KW"/>
</dbReference>
<dbReference type="GO" id="GO:0009098">
    <property type="term" value="P:L-leucine biosynthetic process"/>
    <property type="evidence" value="ECO:0007669"/>
    <property type="project" value="UniProtKB-UniRule"/>
</dbReference>
<dbReference type="CDD" id="cd01583">
    <property type="entry name" value="IPMI"/>
    <property type="match status" value="1"/>
</dbReference>
<dbReference type="FunFam" id="3.30.499.10:FF:000007">
    <property type="entry name" value="3-isopropylmalate dehydratase large subunit"/>
    <property type="match status" value="1"/>
</dbReference>
<dbReference type="Gene3D" id="3.30.499.10">
    <property type="entry name" value="Aconitase, domain 3"/>
    <property type="match status" value="2"/>
</dbReference>
<dbReference type="HAMAP" id="MF_01026">
    <property type="entry name" value="LeuC_type1"/>
    <property type="match status" value="1"/>
</dbReference>
<dbReference type="InterPro" id="IPR004430">
    <property type="entry name" value="3-IsopropMal_deHydase_lsu"/>
</dbReference>
<dbReference type="InterPro" id="IPR015931">
    <property type="entry name" value="Acnase/IPM_dHydase_lsu_aba_1/3"/>
</dbReference>
<dbReference type="InterPro" id="IPR001030">
    <property type="entry name" value="Acoase/IPM_deHydtase_lsu_aba"/>
</dbReference>
<dbReference type="InterPro" id="IPR018136">
    <property type="entry name" value="Aconitase_4Fe-4S_BS"/>
</dbReference>
<dbReference type="InterPro" id="IPR036008">
    <property type="entry name" value="Aconitase_4Fe-4S_dom"/>
</dbReference>
<dbReference type="InterPro" id="IPR050067">
    <property type="entry name" value="IPM_dehydratase_rel_enz"/>
</dbReference>
<dbReference type="InterPro" id="IPR033941">
    <property type="entry name" value="IPMI_cat"/>
</dbReference>
<dbReference type="NCBIfam" id="TIGR00170">
    <property type="entry name" value="leuC"/>
    <property type="match status" value="1"/>
</dbReference>
<dbReference type="NCBIfam" id="NF004016">
    <property type="entry name" value="PRK05478.1"/>
    <property type="match status" value="1"/>
</dbReference>
<dbReference type="NCBIfam" id="NF009116">
    <property type="entry name" value="PRK12466.1"/>
    <property type="match status" value="1"/>
</dbReference>
<dbReference type="PANTHER" id="PTHR43822:SF9">
    <property type="entry name" value="3-ISOPROPYLMALATE DEHYDRATASE"/>
    <property type="match status" value="1"/>
</dbReference>
<dbReference type="PANTHER" id="PTHR43822">
    <property type="entry name" value="HOMOACONITASE, MITOCHONDRIAL-RELATED"/>
    <property type="match status" value="1"/>
</dbReference>
<dbReference type="Pfam" id="PF00330">
    <property type="entry name" value="Aconitase"/>
    <property type="match status" value="1"/>
</dbReference>
<dbReference type="PRINTS" id="PR00415">
    <property type="entry name" value="ACONITASE"/>
</dbReference>
<dbReference type="SUPFAM" id="SSF53732">
    <property type="entry name" value="Aconitase iron-sulfur domain"/>
    <property type="match status" value="1"/>
</dbReference>
<dbReference type="PROSITE" id="PS00450">
    <property type="entry name" value="ACONITASE_1"/>
    <property type="match status" value="1"/>
</dbReference>
<dbReference type="PROSITE" id="PS01244">
    <property type="entry name" value="ACONITASE_2"/>
    <property type="match status" value="1"/>
</dbReference>
<organism>
    <name type="scientific">Burkholderia mallei (strain ATCC 23344)</name>
    <dbReference type="NCBI Taxonomy" id="243160"/>
    <lineage>
        <taxon>Bacteria</taxon>
        <taxon>Pseudomonadati</taxon>
        <taxon>Pseudomonadota</taxon>
        <taxon>Betaproteobacteria</taxon>
        <taxon>Burkholderiales</taxon>
        <taxon>Burkholderiaceae</taxon>
        <taxon>Burkholderia</taxon>
        <taxon>pseudomallei group</taxon>
    </lineage>
</organism>
<accession>Q62AI6</accession>
<evidence type="ECO:0000255" key="1">
    <source>
        <dbReference type="HAMAP-Rule" id="MF_01026"/>
    </source>
</evidence>
<protein>
    <recommendedName>
        <fullName evidence="1">3-isopropylmalate dehydratase large subunit</fullName>
        <ecNumber evidence="1">4.2.1.33</ecNumber>
    </recommendedName>
    <alternativeName>
        <fullName evidence="1">Alpha-IPM isomerase</fullName>
        <shortName evidence="1">IPMI</shortName>
    </alternativeName>
    <alternativeName>
        <fullName evidence="1">Isopropylmalate isomerase</fullName>
    </alternativeName>
</protein>
<sequence>MAQTLYDKLWNSHVVHTEEDGTALLYIDRQLLHEVTSPQAFEGLKLAQRPVWRISANLAVSDHNVPTTDRSHGIADPVSKLQVDTLDANCDAYGITQFKMNDVRQGIVHIIGPEQGATLPGMTIVCGDSHTSTHGAFGALAHGIGTSEVEHVLATQTLLQKKSKNMLVKVEGQLPRGCTAKDIVLAIIGQIGTAGGTGYAIEFGGSTIRALTMEGRMTVCNMAIEAGARAGMVAVDDTTVEYLKGRPFVPTGAEWDQAVEYWKTFRSDEGAQFDRVVELDAAQIVPQVTWGTSPEMVTSIDGRVPDPEREKDPVKRDAMERALAYMALAPNTPIEAIKVDKIFIGSCTNARIEDIRAAAYVVKKLNRRVAPNVRLAMVVPGSGLVKAQAEREGLDKVFTEAGFEWREPGCSMCLAMNADRLEPGERCASTSNRNFEGRQGQGGRTHLVSPAMAAAAAIEGHFVDIRRLG</sequence>
<reference key="1">
    <citation type="journal article" date="2004" name="Proc. Natl. Acad. Sci. U.S.A.">
        <title>Structural flexibility in the Burkholderia mallei genome.</title>
        <authorList>
            <person name="Nierman W.C."/>
            <person name="DeShazer D."/>
            <person name="Kim H.S."/>
            <person name="Tettelin H."/>
            <person name="Nelson K.E."/>
            <person name="Feldblyum T.V."/>
            <person name="Ulrich R.L."/>
            <person name="Ronning C.M."/>
            <person name="Brinkac L.M."/>
            <person name="Daugherty S.C."/>
            <person name="Davidsen T.D."/>
            <person name="DeBoy R.T."/>
            <person name="Dimitrov G."/>
            <person name="Dodson R.J."/>
            <person name="Durkin A.S."/>
            <person name="Gwinn M.L."/>
            <person name="Haft D.H."/>
            <person name="Khouri H.M."/>
            <person name="Kolonay J.F."/>
            <person name="Madupu R."/>
            <person name="Mohammoud Y."/>
            <person name="Nelson W.C."/>
            <person name="Radune D."/>
            <person name="Romero C.M."/>
            <person name="Sarria S."/>
            <person name="Selengut J."/>
            <person name="Shamblin C."/>
            <person name="Sullivan S.A."/>
            <person name="White O."/>
            <person name="Yu Y."/>
            <person name="Zafar N."/>
            <person name="Zhou L."/>
            <person name="Fraser C.M."/>
        </authorList>
    </citation>
    <scope>NUCLEOTIDE SEQUENCE [LARGE SCALE GENOMIC DNA]</scope>
    <source>
        <strain>ATCC 23344</strain>
    </source>
</reference>
<comment type="function">
    <text evidence="1">Catalyzes the isomerization between 2-isopropylmalate and 3-isopropylmalate, via the formation of 2-isopropylmaleate.</text>
</comment>
<comment type="catalytic activity">
    <reaction evidence="1">
        <text>(2R,3S)-3-isopropylmalate = (2S)-2-isopropylmalate</text>
        <dbReference type="Rhea" id="RHEA:32287"/>
        <dbReference type="ChEBI" id="CHEBI:1178"/>
        <dbReference type="ChEBI" id="CHEBI:35121"/>
        <dbReference type="EC" id="4.2.1.33"/>
    </reaction>
</comment>
<comment type="cofactor">
    <cofactor evidence="1">
        <name>[4Fe-4S] cluster</name>
        <dbReference type="ChEBI" id="CHEBI:49883"/>
    </cofactor>
    <text evidence="1">Binds 1 [4Fe-4S] cluster per subunit.</text>
</comment>
<comment type="pathway">
    <text evidence="1">Amino-acid biosynthesis; L-leucine biosynthesis; L-leucine from 3-methyl-2-oxobutanoate: step 2/4.</text>
</comment>
<comment type="subunit">
    <text evidence="1">Heterodimer of LeuC and LeuD.</text>
</comment>
<comment type="similarity">
    <text evidence="1">Belongs to the aconitase/IPM isomerase family. LeuC type 1 subfamily.</text>
</comment>
<name>LEUC_BURMA</name>